<comment type="function">
    <text evidence="1">An accessory protein needed during the final step in the assembly of 30S ribosomal subunit, possibly for assembly of the head region. Essential for efficient processing of 16S rRNA. May be needed both before and after RbfA during the maturation of 16S rRNA. It has affinity for free ribosomal 30S subunits but not for 70S ribosomes.</text>
</comment>
<comment type="subunit">
    <text evidence="1">Binds ribosomal protein uS19.</text>
</comment>
<comment type="subcellular location">
    <subcellularLocation>
        <location evidence="1">Cytoplasm</location>
    </subcellularLocation>
</comment>
<comment type="domain">
    <text evidence="1">The PRC barrel domain binds ribosomal protein uS19.</text>
</comment>
<comment type="similarity">
    <text evidence="1">Belongs to the RimM family.</text>
</comment>
<organism>
    <name type="scientific">Yersinia enterocolitica serotype O:8 / biotype 1B (strain NCTC 13174 / 8081)</name>
    <dbReference type="NCBI Taxonomy" id="393305"/>
    <lineage>
        <taxon>Bacteria</taxon>
        <taxon>Pseudomonadati</taxon>
        <taxon>Pseudomonadota</taxon>
        <taxon>Gammaproteobacteria</taxon>
        <taxon>Enterobacterales</taxon>
        <taxon>Yersiniaceae</taxon>
        <taxon>Yersinia</taxon>
    </lineage>
</organism>
<accession>A1JK24</accession>
<name>RIMM_YERE8</name>
<dbReference type="EMBL" id="AM286415">
    <property type="protein sequence ID" value="CAL10944.1"/>
    <property type="molecule type" value="Genomic_DNA"/>
</dbReference>
<dbReference type="RefSeq" id="WP_005166009.1">
    <property type="nucleotide sequence ID" value="NC_008800.1"/>
</dbReference>
<dbReference type="RefSeq" id="YP_001005182.1">
    <property type="nucleotide sequence ID" value="NC_008800.1"/>
</dbReference>
<dbReference type="SMR" id="A1JK24"/>
<dbReference type="GeneID" id="93971120"/>
<dbReference type="KEGG" id="yen:YE0844"/>
<dbReference type="PATRIC" id="fig|393305.7.peg.938"/>
<dbReference type="eggNOG" id="COG0806">
    <property type="taxonomic scope" value="Bacteria"/>
</dbReference>
<dbReference type="HOGENOM" id="CLU_077636_1_0_6"/>
<dbReference type="OrthoDB" id="9783509at2"/>
<dbReference type="Proteomes" id="UP000000642">
    <property type="component" value="Chromosome"/>
</dbReference>
<dbReference type="GO" id="GO:0005737">
    <property type="term" value="C:cytoplasm"/>
    <property type="evidence" value="ECO:0007669"/>
    <property type="project" value="UniProtKB-SubCell"/>
</dbReference>
<dbReference type="GO" id="GO:0005840">
    <property type="term" value="C:ribosome"/>
    <property type="evidence" value="ECO:0007669"/>
    <property type="project" value="InterPro"/>
</dbReference>
<dbReference type="GO" id="GO:0043022">
    <property type="term" value="F:ribosome binding"/>
    <property type="evidence" value="ECO:0007669"/>
    <property type="project" value="InterPro"/>
</dbReference>
<dbReference type="GO" id="GO:0042274">
    <property type="term" value="P:ribosomal small subunit biogenesis"/>
    <property type="evidence" value="ECO:0007669"/>
    <property type="project" value="UniProtKB-UniRule"/>
</dbReference>
<dbReference type="GO" id="GO:0006364">
    <property type="term" value="P:rRNA processing"/>
    <property type="evidence" value="ECO:0007669"/>
    <property type="project" value="UniProtKB-UniRule"/>
</dbReference>
<dbReference type="FunFam" id="2.30.30.240:FF:000001">
    <property type="entry name" value="Ribosome maturation factor RimM"/>
    <property type="match status" value="1"/>
</dbReference>
<dbReference type="FunFam" id="2.40.30.60:FF:000001">
    <property type="entry name" value="Ribosome maturation factor RimM"/>
    <property type="match status" value="1"/>
</dbReference>
<dbReference type="Gene3D" id="2.30.30.240">
    <property type="entry name" value="PRC-barrel domain"/>
    <property type="match status" value="1"/>
</dbReference>
<dbReference type="Gene3D" id="2.40.30.60">
    <property type="entry name" value="RimM"/>
    <property type="match status" value="1"/>
</dbReference>
<dbReference type="HAMAP" id="MF_00014">
    <property type="entry name" value="Ribosome_mat_RimM"/>
    <property type="match status" value="1"/>
</dbReference>
<dbReference type="InterPro" id="IPR011033">
    <property type="entry name" value="PRC_barrel-like_sf"/>
</dbReference>
<dbReference type="InterPro" id="IPR056792">
    <property type="entry name" value="PRC_RimM"/>
</dbReference>
<dbReference type="InterPro" id="IPR011961">
    <property type="entry name" value="RimM"/>
</dbReference>
<dbReference type="InterPro" id="IPR002676">
    <property type="entry name" value="RimM_N"/>
</dbReference>
<dbReference type="InterPro" id="IPR036976">
    <property type="entry name" value="RimM_N_sf"/>
</dbReference>
<dbReference type="InterPro" id="IPR009000">
    <property type="entry name" value="Transl_B-barrel_sf"/>
</dbReference>
<dbReference type="NCBIfam" id="TIGR02273">
    <property type="entry name" value="16S_RimM"/>
    <property type="match status" value="1"/>
</dbReference>
<dbReference type="PANTHER" id="PTHR33692">
    <property type="entry name" value="RIBOSOME MATURATION FACTOR RIMM"/>
    <property type="match status" value="1"/>
</dbReference>
<dbReference type="PANTHER" id="PTHR33692:SF1">
    <property type="entry name" value="RIBOSOME MATURATION FACTOR RIMM"/>
    <property type="match status" value="1"/>
</dbReference>
<dbReference type="Pfam" id="PF24986">
    <property type="entry name" value="PRC_RimM"/>
    <property type="match status" value="1"/>
</dbReference>
<dbReference type="Pfam" id="PF01782">
    <property type="entry name" value="RimM"/>
    <property type="match status" value="1"/>
</dbReference>
<dbReference type="SUPFAM" id="SSF50346">
    <property type="entry name" value="PRC-barrel domain"/>
    <property type="match status" value="1"/>
</dbReference>
<dbReference type="SUPFAM" id="SSF50447">
    <property type="entry name" value="Translation proteins"/>
    <property type="match status" value="1"/>
</dbReference>
<keyword id="KW-0143">Chaperone</keyword>
<keyword id="KW-0963">Cytoplasm</keyword>
<keyword id="KW-0690">Ribosome biogenesis</keyword>
<keyword id="KW-0698">rRNA processing</keyword>
<reference key="1">
    <citation type="journal article" date="2006" name="PLoS Genet.">
        <title>The complete genome sequence and comparative genome analysis of the high pathogenicity Yersinia enterocolitica strain 8081.</title>
        <authorList>
            <person name="Thomson N.R."/>
            <person name="Howard S."/>
            <person name="Wren B.W."/>
            <person name="Holden M.T.G."/>
            <person name="Crossman L."/>
            <person name="Challis G.L."/>
            <person name="Churcher C."/>
            <person name="Mungall K."/>
            <person name="Brooks K."/>
            <person name="Chillingworth T."/>
            <person name="Feltwell T."/>
            <person name="Abdellah Z."/>
            <person name="Hauser H."/>
            <person name="Jagels K."/>
            <person name="Maddison M."/>
            <person name="Moule S."/>
            <person name="Sanders M."/>
            <person name="Whitehead S."/>
            <person name="Quail M.A."/>
            <person name="Dougan G."/>
            <person name="Parkhill J."/>
            <person name="Prentice M.B."/>
        </authorList>
    </citation>
    <scope>NUCLEOTIDE SEQUENCE [LARGE SCALE GENOMIC DNA]</scope>
    <source>
        <strain>NCTC 13174 / 8081</strain>
    </source>
</reference>
<gene>
    <name evidence="1" type="primary">rimM</name>
    <name type="ordered locus">YE0844</name>
</gene>
<proteinExistence type="inferred from homology"/>
<protein>
    <recommendedName>
        <fullName evidence="1">Ribosome maturation factor RimM</fullName>
    </recommendedName>
</protein>
<feature type="chain" id="PRO_1000001246" description="Ribosome maturation factor RimM">
    <location>
        <begin position="1"/>
        <end position="182"/>
    </location>
</feature>
<feature type="domain" description="PRC barrel" evidence="1">
    <location>
        <begin position="103"/>
        <end position="182"/>
    </location>
</feature>
<evidence type="ECO:0000255" key="1">
    <source>
        <dbReference type="HAMAP-Rule" id="MF_00014"/>
    </source>
</evidence>
<sequence length="182" mass="20795">MSKQLNPVVPEQPIVLGKMGSTYGIRGWLRVFSSTENAESIFDYQPWFIQQGGKWQHVELEDWKRHSQDLIIKVKGVDDRDAANLLTNCEIVVDSKQLPELEEDDYYWKDLMGCQVVTTAGYELGKIIDMMETGSNDVMVVKANLKDAFGMKERLVPFLHGQVIKNVDLTAQRVEVDWDPGF</sequence>